<protein>
    <recommendedName>
        <fullName evidence="1">Holliday junction resolvase RecU</fullName>
        <ecNumber evidence="1">3.1.21.10</ecNumber>
    </recommendedName>
    <alternativeName>
        <fullName evidence="1">Recombination protein U homolog</fullName>
    </alternativeName>
</protein>
<comment type="function">
    <text evidence="1">Endonuclease that resolves Holliday junction intermediates in genetic recombination. Cleaves mobile four-strand junctions by introducing symmetrical nicks in paired strands. Promotes annealing of linear ssDNA with homologous dsDNA. Required for DNA repair, homologous recombination and chromosome segregation.</text>
</comment>
<comment type="catalytic activity">
    <reaction evidence="1">
        <text>Endonucleolytic cleavage at a junction such as a reciprocal single-stranded crossover between two homologous DNA duplexes (Holliday junction).</text>
        <dbReference type="EC" id="3.1.21.10"/>
    </reaction>
</comment>
<comment type="cofactor">
    <cofactor evidence="1">
        <name>Mg(2+)</name>
        <dbReference type="ChEBI" id="CHEBI:18420"/>
    </cofactor>
    <text evidence="1">Binds 1 Mg(2+) ion per subunit.</text>
</comment>
<comment type="subcellular location">
    <subcellularLocation>
        <location evidence="1">Cytoplasm</location>
    </subcellularLocation>
</comment>
<comment type="similarity">
    <text evidence="1">Belongs to the RecU family.</text>
</comment>
<keyword id="KW-0963">Cytoplasm</keyword>
<keyword id="KW-0227">DNA damage</keyword>
<keyword id="KW-0233">DNA recombination</keyword>
<keyword id="KW-0234">DNA repair</keyword>
<keyword id="KW-0255">Endonuclease</keyword>
<keyword id="KW-0378">Hydrolase</keyword>
<keyword id="KW-0460">Magnesium</keyword>
<keyword id="KW-0479">Metal-binding</keyword>
<keyword id="KW-0540">Nuclease</keyword>
<reference key="1">
    <citation type="journal article" date="2003" name="Mol. Microbiol.">
        <title>Genome-based analysis of virulence genes in a non-biofilm-forming Staphylococcus epidermidis strain (ATCC 12228).</title>
        <authorList>
            <person name="Zhang Y.-Q."/>
            <person name="Ren S.-X."/>
            <person name="Li H.-L."/>
            <person name="Wang Y.-X."/>
            <person name="Fu G."/>
            <person name="Yang J."/>
            <person name="Qin Z.-Q."/>
            <person name="Miao Y.-G."/>
            <person name="Wang W.-Y."/>
            <person name="Chen R.-S."/>
            <person name="Shen Y."/>
            <person name="Chen Z."/>
            <person name="Yuan Z.-H."/>
            <person name="Zhao G.-P."/>
            <person name="Qu D."/>
            <person name="Danchin A."/>
            <person name="Wen Y.-M."/>
        </authorList>
    </citation>
    <scope>NUCLEOTIDE SEQUENCE [LARGE SCALE GENOMIC DNA]</scope>
    <source>
        <strain>ATCC 12228 / FDA PCI 1200</strain>
    </source>
</reference>
<sequence length="208" mass="24507">MNYPNGKPYSKNKPLDGRKSSPFSSNIEYGGRGMTLEKDIEQSNTFYLKSGIAVIHKKPTPVQIVNVHYPKRSKAVINEAYFRTPSTTDYNGVYNGYYIDFEAKETKNKTSFPLNNIHAHQVEHMKNTYHQKGIVFLMIRFKSLDEVYLLPYSKFEKYWQRYINNIKKSITVEEIRKNGYHIPYQYQPRLNYLKAVDKLILDESEDRV</sequence>
<feature type="chain" id="PRO_0000212309" description="Holliday junction resolvase RecU">
    <location>
        <begin position="1"/>
        <end position="208"/>
    </location>
</feature>
<feature type="region of interest" description="Disordered" evidence="2">
    <location>
        <begin position="1"/>
        <end position="28"/>
    </location>
</feature>
<feature type="binding site" evidence="1">
    <location>
        <position position="87"/>
    </location>
    <ligand>
        <name>Mg(2+)</name>
        <dbReference type="ChEBI" id="CHEBI:18420"/>
    </ligand>
</feature>
<feature type="binding site" evidence="1">
    <location>
        <position position="89"/>
    </location>
    <ligand>
        <name>Mg(2+)</name>
        <dbReference type="ChEBI" id="CHEBI:18420"/>
    </ligand>
</feature>
<feature type="binding site" evidence="1">
    <location>
        <position position="102"/>
    </location>
    <ligand>
        <name>Mg(2+)</name>
        <dbReference type="ChEBI" id="CHEBI:18420"/>
    </ligand>
</feature>
<feature type="binding site" evidence="1">
    <location>
        <position position="121"/>
    </location>
    <ligand>
        <name>Mg(2+)</name>
        <dbReference type="ChEBI" id="CHEBI:18420"/>
    </ligand>
</feature>
<feature type="site" description="Transition state stabilizer" evidence="1">
    <location>
        <position position="104"/>
    </location>
</feature>
<evidence type="ECO:0000255" key="1">
    <source>
        <dbReference type="HAMAP-Rule" id="MF_00130"/>
    </source>
</evidence>
<evidence type="ECO:0000256" key="2">
    <source>
        <dbReference type="SAM" id="MobiDB-lite"/>
    </source>
</evidence>
<gene>
    <name evidence="1" type="primary">recU</name>
    <name type="ordered locus">SE_1137</name>
</gene>
<organism>
    <name type="scientific">Staphylococcus epidermidis (strain ATCC 12228 / FDA PCI 1200)</name>
    <dbReference type="NCBI Taxonomy" id="176280"/>
    <lineage>
        <taxon>Bacteria</taxon>
        <taxon>Bacillati</taxon>
        <taxon>Bacillota</taxon>
        <taxon>Bacilli</taxon>
        <taxon>Bacillales</taxon>
        <taxon>Staphylococcaceae</taxon>
        <taxon>Staphylococcus</taxon>
    </lineage>
</organism>
<accession>Q8CP75</accession>
<dbReference type="EC" id="3.1.21.10" evidence="1"/>
<dbReference type="EMBL" id="AE015929">
    <property type="protein sequence ID" value="AAO04734.1"/>
    <property type="molecule type" value="Genomic_DNA"/>
</dbReference>
<dbReference type="RefSeq" id="NP_764692.1">
    <property type="nucleotide sequence ID" value="NC_004461.1"/>
</dbReference>
<dbReference type="RefSeq" id="WP_002476769.1">
    <property type="nucleotide sequence ID" value="NZ_WBME01000006.1"/>
</dbReference>
<dbReference type="SMR" id="Q8CP75"/>
<dbReference type="GeneID" id="50018740"/>
<dbReference type="KEGG" id="sep:SE_1137"/>
<dbReference type="PATRIC" id="fig|176280.10.peg.1110"/>
<dbReference type="eggNOG" id="COG3331">
    <property type="taxonomic scope" value="Bacteria"/>
</dbReference>
<dbReference type="HOGENOM" id="CLU_096340_0_0_9"/>
<dbReference type="OrthoDB" id="9783592at2"/>
<dbReference type="Proteomes" id="UP000001411">
    <property type="component" value="Chromosome"/>
</dbReference>
<dbReference type="GO" id="GO:0005737">
    <property type="term" value="C:cytoplasm"/>
    <property type="evidence" value="ECO:0007669"/>
    <property type="project" value="UniProtKB-SubCell"/>
</dbReference>
<dbReference type="GO" id="GO:0004519">
    <property type="term" value="F:endonuclease activity"/>
    <property type="evidence" value="ECO:0007669"/>
    <property type="project" value="UniProtKB-UniRule"/>
</dbReference>
<dbReference type="GO" id="GO:0000287">
    <property type="term" value="F:magnesium ion binding"/>
    <property type="evidence" value="ECO:0007669"/>
    <property type="project" value="UniProtKB-UniRule"/>
</dbReference>
<dbReference type="GO" id="GO:0003676">
    <property type="term" value="F:nucleic acid binding"/>
    <property type="evidence" value="ECO:0007669"/>
    <property type="project" value="InterPro"/>
</dbReference>
<dbReference type="GO" id="GO:0007059">
    <property type="term" value="P:chromosome segregation"/>
    <property type="evidence" value="ECO:0007669"/>
    <property type="project" value="UniProtKB-UniRule"/>
</dbReference>
<dbReference type="GO" id="GO:0006310">
    <property type="term" value="P:DNA recombination"/>
    <property type="evidence" value="ECO:0007669"/>
    <property type="project" value="UniProtKB-UniRule"/>
</dbReference>
<dbReference type="GO" id="GO:0006281">
    <property type="term" value="P:DNA repair"/>
    <property type="evidence" value="ECO:0007669"/>
    <property type="project" value="UniProtKB-UniRule"/>
</dbReference>
<dbReference type="CDD" id="cd22354">
    <property type="entry name" value="RecU-like"/>
    <property type="match status" value="1"/>
</dbReference>
<dbReference type="Gene3D" id="3.40.1350.10">
    <property type="match status" value="1"/>
</dbReference>
<dbReference type="HAMAP" id="MF_00130">
    <property type="entry name" value="RecU"/>
    <property type="match status" value="1"/>
</dbReference>
<dbReference type="InterPro" id="IPR004612">
    <property type="entry name" value="Resolv_RecU"/>
</dbReference>
<dbReference type="InterPro" id="IPR011335">
    <property type="entry name" value="Restrct_endonuc-II-like"/>
</dbReference>
<dbReference type="InterPro" id="IPR011856">
    <property type="entry name" value="tRNA_endonuc-like_dom_sf"/>
</dbReference>
<dbReference type="NCBIfam" id="NF002581">
    <property type="entry name" value="PRK02234.1-2"/>
    <property type="match status" value="1"/>
</dbReference>
<dbReference type="NCBIfam" id="NF002583">
    <property type="entry name" value="PRK02234.1-4"/>
    <property type="match status" value="1"/>
</dbReference>
<dbReference type="NCBIfam" id="NF002584">
    <property type="entry name" value="PRK02234.1-5"/>
    <property type="match status" value="1"/>
</dbReference>
<dbReference type="NCBIfam" id="TIGR00648">
    <property type="entry name" value="recU"/>
    <property type="match status" value="1"/>
</dbReference>
<dbReference type="Pfam" id="PF03838">
    <property type="entry name" value="RecU"/>
    <property type="match status" value="1"/>
</dbReference>
<dbReference type="PIRSF" id="PIRSF037785">
    <property type="entry name" value="RecU"/>
    <property type="match status" value="1"/>
</dbReference>
<dbReference type="SUPFAM" id="SSF52980">
    <property type="entry name" value="Restriction endonuclease-like"/>
    <property type="match status" value="1"/>
</dbReference>
<proteinExistence type="inferred from homology"/>
<name>RECU_STAES</name>